<evidence type="ECO:0000250" key="1">
    <source>
        <dbReference type="UniProtKB" id="Q9LNF2"/>
    </source>
</evidence>
<evidence type="ECO:0000250" key="2">
    <source>
        <dbReference type="UniProtKB" id="Q9STY5"/>
    </source>
</evidence>
<evidence type="ECO:0000255" key="3"/>
<evidence type="ECO:0000269" key="4">
    <source>
    </source>
</evidence>
<evidence type="ECO:0000269" key="5">
    <source>
    </source>
</evidence>
<evidence type="ECO:0000303" key="6">
    <source>
    </source>
</evidence>
<evidence type="ECO:0000305" key="7"/>
<evidence type="ECO:0000305" key="8">
    <source>
    </source>
</evidence>
<evidence type="ECO:0000312" key="9">
    <source>
        <dbReference type="Araport" id="AT4G25260"/>
    </source>
</evidence>
<evidence type="ECO:0000312" key="10">
    <source>
        <dbReference type="EMBL" id="CAA23067.1"/>
    </source>
</evidence>
<sequence>MARNFELSLILFVLYLSTAAIVMARNLEEESSGDTEFIKASCETTSYPDRCFQSLSSYASEIKKQPRKLAETALAVSIARAKSAKTYVSEMTDYKGITKRQHEAVADCLEEMGDTVDRLSNSLKELKHLEEGDSGEDFWFCLSNVRTWTSAALTDETACMDGFGGKAMAGELKSLIRTHIVSVAEETSNALALINDFASKH</sequence>
<dbReference type="EMBL" id="AL035396">
    <property type="protein sequence ID" value="CAA23067.1"/>
    <property type="molecule type" value="Genomic_DNA"/>
</dbReference>
<dbReference type="EMBL" id="AL161563">
    <property type="protein sequence ID" value="CAB81337.1"/>
    <property type="molecule type" value="Genomic_DNA"/>
</dbReference>
<dbReference type="EMBL" id="CP002687">
    <property type="protein sequence ID" value="AEE85032.1"/>
    <property type="molecule type" value="Genomic_DNA"/>
</dbReference>
<dbReference type="EMBL" id="AY058853">
    <property type="protein sequence ID" value="AAL24241.1"/>
    <property type="molecule type" value="mRNA"/>
</dbReference>
<dbReference type="EMBL" id="AY079038">
    <property type="protein sequence ID" value="AAL79588.1"/>
    <property type="molecule type" value="mRNA"/>
</dbReference>
<dbReference type="PIR" id="T05547">
    <property type="entry name" value="T05547"/>
</dbReference>
<dbReference type="RefSeq" id="NP_194256.1">
    <property type="nucleotide sequence ID" value="NM_118658.4"/>
</dbReference>
<dbReference type="SMR" id="Q9SB37"/>
<dbReference type="FunCoup" id="Q9SB37">
    <property type="interactions" value="4"/>
</dbReference>
<dbReference type="STRING" id="3702.Q9SB37"/>
<dbReference type="PaxDb" id="3702-AT4G25260.1"/>
<dbReference type="ProteomicsDB" id="234781"/>
<dbReference type="DNASU" id="828629"/>
<dbReference type="EnsemblPlants" id="AT4G25260.1">
    <property type="protein sequence ID" value="AT4G25260.1"/>
    <property type="gene ID" value="AT4G25260"/>
</dbReference>
<dbReference type="GeneID" id="828629"/>
<dbReference type="Gramene" id="AT4G25260.1">
    <property type="protein sequence ID" value="AT4G25260.1"/>
    <property type="gene ID" value="AT4G25260"/>
</dbReference>
<dbReference type="KEGG" id="ath:AT4G25260"/>
<dbReference type="Araport" id="AT4G25260"/>
<dbReference type="TAIR" id="AT4G25260">
    <property type="gene designation" value="PMEI7"/>
</dbReference>
<dbReference type="eggNOG" id="ENOG502QXIN">
    <property type="taxonomic scope" value="Eukaryota"/>
</dbReference>
<dbReference type="HOGENOM" id="CLU_033761_0_2_1"/>
<dbReference type="InParanoid" id="Q9SB37"/>
<dbReference type="OMA" id="SGEDFWF"/>
<dbReference type="PhylomeDB" id="Q9SB37"/>
<dbReference type="PRO" id="PR:Q9SB37"/>
<dbReference type="Proteomes" id="UP000006548">
    <property type="component" value="Chromosome 4"/>
</dbReference>
<dbReference type="ExpressionAtlas" id="Q9SB37">
    <property type="expression patterns" value="baseline and differential"/>
</dbReference>
<dbReference type="GO" id="GO:0048046">
    <property type="term" value="C:apoplast"/>
    <property type="evidence" value="ECO:0007669"/>
    <property type="project" value="UniProtKB-SubCell"/>
</dbReference>
<dbReference type="GO" id="GO:0009505">
    <property type="term" value="C:plant-type cell wall"/>
    <property type="evidence" value="ECO:0000314"/>
    <property type="project" value="UniProtKB"/>
</dbReference>
<dbReference type="GO" id="GO:0046910">
    <property type="term" value="F:pectinesterase inhibitor activity"/>
    <property type="evidence" value="ECO:0000314"/>
    <property type="project" value="TAIR"/>
</dbReference>
<dbReference type="GO" id="GO:0043086">
    <property type="term" value="P:negative regulation of catalytic activity"/>
    <property type="evidence" value="ECO:0000314"/>
    <property type="project" value="TAIR"/>
</dbReference>
<dbReference type="GO" id="GO:0009641">
    <property type="term" value="P:shade avoidance"/>
    <property type="evidence" value="ECO:0000270"/>
    <property type="project" value="TAIR"/>
</dbReference>
<dbReference type="CDD" id="cd15798">
    <property type="entry name" value="PMEI-like_3"/>
    <property type="match status" value="1"/>
</dbReference>
<dbReference type="FunFam" id="1.20.140.40:FF:000005">
    <property type="entry name" value="Pectin methylesterase inhibitor 1"/>
    <property type="match status" value="1"/>
</dbReference>
<dbReference type="Gene3D" id="1.20.140.40">
    <property type="entry name" value="Invertase/pectin methylesterase inhibitor family protein"/>
    <property type="match status" value="1"/>
</dbReference>
<dbReference type="InterPro" id="IPR035513">
    <property type="entry name" value="Invertase/methylesterase_inhib"/>
</dbReference>
<dbReference type="InterPro" id="IPR006501">
    <property type="entry name" value="Pectinesterase_inhib_dom"/>
</dbReference>
<dbReference type="InterPro" id="IPR051955">
    <property type="entry name" value="PME_Inhibitor"/>
</dbReference>
<dbReference type="NCBIfam" id="TIGR01614">
    <property type="entry name" value="PME_inhib"/>
    <property type="match status" value="1"/>
</dbReference>
<dbReference type="PANTHER" id="PTHR31080:SF87">
    <property type="entry name" value="PECTINESTERASE INHIBITOR 7"/>
    <property type="match status" value="1"/>
</dbReference>
<dbReference type="PANTHER" id="PTHR31080">
    <property type="entry name" value="PECTINESTERASE INHIBITOR-LIKE"/>
    <property type="match status" value="1"/>
</dbReference>
<dbReference type="Pfam" id="PF04043">
    <property type="entry name" value="PMEI"/>
    <property type="match status" value="1"/>
</dbReference>
<dbReference type="SMART" id="SM00856">
    <property type="entry name" value="PMEI"/>
    <property type="match status" value="1"/>
</dbReference>
<dbReference type="SUPFAM" id="SSF101148">
    <property type="entry name" value="Plant invertase/pectin methylesterase inhibitor"/>
    <property type="match status" value="1"/>
</dbReference>
<proteinExistence type="evidence at protein level"/>
<feature type="signal peptide" evidence="3">
    <location>
        <begin position="1"/>
        <end position="24"/>
    </location>
</feature>
<feature type="chain" id="PRO_5008430271" description="Pectinesterase inhibitor 7">
    <location>
        <begin position="25"/>
        <end position="201"/>
    </location>
</feature>
<feature type="site" description="Involved in pH-dependent PME3 binding" evidence="8">
    <location>
        <position position="85"/>
    </location>
</feature>
<feature type="site" description="Involved in pH-dependent PME3 binding" evidence="5">
    <location>
        <position position="103"/>
    </location>
</feature>
<feature type="site" description="Required for pH-dependent PME3 binding and subsequent repression in acidic conditions" evidence="5">
    <location>
        <position position="110"/>
    </location>
</feature>
<feature type="site" description="Involved in pH-dependent PME3 binding" evidence="8">
    <location>
        <position position="114"/>
    </location>
</feature>
<feature type="site" description="Involved in pH-dependent PME3 binding" evidence="8">
    <location>
        <position position="118"/>
    </location>
</feature>
<feature type="site" description="Involved in pH-dependent PME3 binding" evidence="8">
    <location>
        <position position="125"/>
    </location>
</feature>
<feature type="disulfide bond" evidence="1">
    <location>
        <begin position="42"/>
        <end position="51"/>
    </location>
</feature>
<feature type="disulfide bond" evidence="1">
    <location>
        <begin position="108"/>
        <end position="159"/>
    </location>
</feature>
<feature type="mutagenesis site" description="Slightly reduced ability to repress PME3 in acidic conditions, at pH 5." evidence="5">
    <original>E</original>
    <variation>A</variation>
    <location>
        <position position="103"/>
    </location>
</feature>
<feature type="mutagenesis site" description="Strongly reduced ability to repress PME3 in acidic conditions, at pH 5." evidence="5">
    <original>E</original>
    <variation>A</variation>
    <location>
        <position position="110"/>
    </location>
</feature>
<organism>
    <name type="scientific">Arabidopsis thaliana</name>
    <name type="common">Mouse-ear cress</name>
    <dbReference type="NCBI Taxonomy" id="3702"/>
    <lineage>
        <taxon>Eukaryota</taxon>
        <taxon>Viridiplantae</taxon>
        <taxon>Streptophyta</taxon>
        <taxon>Embryophyta</taxon>
        <taxon>Tracheophyta</taxon>
        <taxon>Spermatophyta</taxon>
        <taxon>Magnoliopsida</taxon>
        <taxon>eudicotyledons</taxon>
        <taxon>Gunneridae</taxon>
        <taxon>Pentapetalae</taxon>
        <taxon>rosids</taxon>
        <taxon>malvids</taxon>
        <taxon>Brassicales</taxon>
        <taxon>Brassicaceae</taxon>
        <taxon>Camelineae</taxon>
        <taxon>Arabidopsis</taxon>
    </lineage>
</organism>
<name>PMEI7_ARATH</name>
<gene>
    <name evidence="6" type="primary">PMEI7</name>
    <name evidence="9" type="ordered locus">At4g25260</name>
    <name evidence="10" type="ORF">F24A6.100</name>
</gene>
<accession>Q9SB37</accession>
<protein>
    <recommendedName>
        <fullName evidence="7">Pectinesterase inhibitor 7</fullName>
    </recommendedName>
    <alternativeName>
        <fullName evidence="6">Pectin methylesterase inhibitor 7</fullName>
        <shortName evidence="6">AtPMEI7</shortName>
    </alternativeName>
</protein>
<reference key="1">
    <citation type="journal article" date="1999" name="Nature">
        <title>Sequence and analysis of chromosome 4 of the plant Arabidopsis thaliana.</title>
        <authorList>
            <person name="Mayer K.F.X."/>
            <person name="Schueller C."/>
            <person name="Wambutt R."/>
            <person name="Murphy G."/>
            <person name="Volckaert G."/>
            <person name="Pohl T."/>
            <person name="Duesterhoeft A."/>
            <person name="Stiekema W."/>
            <person name="Entian K.-D."/>
            <person name="Terryn N."/>
            <person name="Harris B."/>
            <person name="Ansorge W."/>
            <person name="Brandt P."/>
            <person name="Grivell L.A."/>
            <person name="Rieger M."/>
            <person name="Weichselgartner M."/>
            <person name="de Simone V."/>
            <person name="Obermaier B."/>
            <person name="Mache R."/>
            <person name="Mueller M."/>
            <person name="Kreis M."/>
            <person name="Delseny M."/>
            <person name="Puigdomenech P."/>
            <person name="Watson M."/>
            <person name="Schmidtheini T."/>
            <person name="Reichert B."/>
            <person name="Portetelle D."/>
            <person name="Perez-Alonso M."/>
            <person name="Boutry M."/>
            <person name="Bancroft I."/>
            <person name="Vos P."/>
            <person name="Hoheisel J."/>
            <person name="Zimmermann W."/>
            <person name="Wedler H."/>
            <person name="Ridley P."/>
            <person name="Langham S.-A."/>
            <person name="McCullagh B."/>
            <person name="Bilham L."/>
            <person name="Robben J."/>
            <person name="van der Schueren J."/>
            <person name="Grymonprez B."/>
            <person name="Chuang Y.-J."/>
            <person name="Vandenbussche F."/>
            <person name="Braeken M."/>
            <person name="Weltjens I."/>
            <person name="Voet M."/>
            <person name="Bastiaens I."/>
            <person name="Aert R."/>
            <person name="Defoor E."/>
            <person name="Weitzenegger T."/>
            <person name="Bothe G."/>
            <person name="Ramsperger U."/>
            <person name="Hilbert H."/>
            <person name="Braun M."/>
            <person name="Holzer E."/>
            <person name="Brandt A."/>
            <person name="Peters S."/>
            <person name="van Staveren M."/>
            <person name="Dirkse W."/>
            <person name="Mooijman P."/>
            <person name="Klein Lankhorst R."/>
            <person name="Rose M."/>
            <person name="Hauf J."/>
            <person name="Koetter P."/>
            <person name="Berneiser S."/>
            <person name="Hempel S."/>
            <person name="Feldpausch M."/>
            <person name="Lamberth S."/>
            <person name="Van den Daele H."/>
            <person name="De Keyser A."/>
            <person name="Buysshaert C."/>
            <person name="Gielen J."/>
            <person name="Villarroel R."/>
            <person name="De Clercq R."/>
            <person name="van Montagu M."/>
            <person name="Rogers J."/>
            <person name="Cronin A."/>
            <person name="Quail M.A."/>
            <person name="Bray-Allen S."/>
            <person name="Clark L."/>
            <person name="Doggett J."/>
            <person name="Hall S."/>
            <person name="Kay M."/>
            <person name="Lennard N."/>
            <person name="McLay K."/>
            <person name="Mayes R."/>
            <person name="Pettett A."/>
            <person name="Rajandream M.A."/>
            <person name="Lyne M."/>
            <person name="Benes V."/>
            <person name="Rechmann S."/>
            <person name="Borkova D."/>
            <person name="Bloecker H."/>
            <person name="Scharfe M."/>
            <person name="Grimm M."/>
            <person name="Loehnert T.-H."/>
            <person name="Dose S."/>
            <person name="de Haan M."/>
            <person name="Maarse A.C."/>
            <person name="Schaefer M."/>
            <person name="Mueller-Auer S."/>
            <person name="Gabel C."/>
            <person name="Fuchs M."/>
            <person name="Fartmann B."/>
            <person name="Granderath K."/>
            <person name="Dauner D."/>
            <person name="Herzl A."/>
            <person name="Neumann S."/>
            <person name="Argiriou A."/>
            <person name="Vitale D."/>
            <person name="Liguori R."/>
            <person name="Piravandi E."/>
            <person name="Massenet O."/>
            <person name="Quigley F."/>
            <person name="Clabauld G."/>
            <person name="Muendlein A."/>
            <person name="Felber R."/>
            <person name="Schnabl S."/>
            <person name="Hiller R."/>
            <person name="Schmidt W."/>
            <person name="Lecharny A."/>
            <person name="Aubourg S."/>
            <person name="Chefdor F."/>
            <person name="Cooke R."/>
            <person name="Berger C."/>
            <person name="Monfort A."/>
            <person name="Casacuberta E."/>
            <person name="Gibbons T."/>
            <person name="Weber N."/>
            <person name="Vandenbol M."/>
            <person name="Bargues M."/>
            <person name="Terol J."/>
            <person name="Torres A."/>
            <person name="Perez-Perez A."/>
            <person name="Purnelle B."/>
            <person name="Bent E."/>
            <person name="Johnson S."/>
            <person name="Tacon D."/>
            <person name="Jesse T."/>
            <person name="Heijnen L."/>
            <person name="Schwarz S."/>
            <person name="Scholler P."/>
            <person name="Heber S."/>
            <person name="Francs P."/>
            <person name="Bielke C."/>
            <person name="Frishman D."/>
            <person name="Haase D."/>
            <person name="Lemcke K."/>
            <person name="Mewes H.-W."/>
            <person name="Stocker S."/>
            <person name="Zaccaria P."/>
            <person name="Bevan M."/>
            <person name="Wilson R.K."/>
            <person name="de la Bastide M."/>
            <person name="Habermann K."/>
            <person name="Parnell L."/>
            <person name="Dedhia N."/>
            <person name="Gnoj L."/>
            <person name="Schutz K."/>
            <person name="Huang E."/>
            <person name="Spiegel L."/>
            <person name="Sekhon M."/>
            <person name="Murray J."/>
            <person name="Sheet P."/>
            <person name="Cordes M."/>
            <person name="Abu-Threideh J."/>
            <person name="Stoneking T."/>
            <person name="Kalicki J."/>
            <person name="Graves T."/>
            <person name="Harmon G."/>
            <person name="Edwards J."/>
            <person name="Latreille P."/>
            <person name="Courtney L."/>
            <person name="Cloud J."/>
            <person name="Abbott A."/>
            <person name="Scott K."/>
            <person name="Johnson D."/>
            <person name="Minx P."/>
            <person name="Bentley D."/>
            <person name="Fulton B."/>
            <person name="Miller N."/>
            <person name="Greco T."/>
            <person name="Kemp K."/>
            <person name="Kramer J."/>
            <person name="Fulton L."/>
            <person name="Mardis E."/>
            <person name="Dante M."/>
            <person name="Pepin K."/>
            <person name="Hillier L.W."/>
            <person name="Nelson J."/>
            <person name="Spieth J."/>
            <person name="Ryan E."/>
            <person name="Andrews S."/>
            <person name="Geisel C."/>
            <person name="Layman D."/>
            <person name="Du H."/>
            <person name="Ali J."/>
            <person name="Berghoff A."/>
            <person name="Jones K."/>
            <person name="Drone K."/>
            <person name="Cotton M."/>
            <person name="Joshu C."/>
            <person name="Antonoiu B."/>
            <person name="Zidanic M."/>
            <person name="Strong C."/>
            <person name="Sun H."/>
            <person name="Lamar B."/>
            <person name="Yordan C."/>
            <person name="Ma P."/>
            <person name="Zhong J."/>
            <person name="Preston R."/>
            <person name="Vil D."/>
            <person name="Shekher M."/>
            <person name="Matero A."/>
            <person name="Shah R."/>
            <person name="Swaby I.K."/>
            <person name="O'Shaughnessy A."/>
            <person name="Rodriguez M."/>
            <person name="Hoffman J."/>
            <person name="Till S."/>
            <person name="Granat S."/>
            <person name="Shohdy N."/>
            <person name="Hasegawa A."/>
            <person name="Hameed A."/>
            <person name="Lodhi M."/>
            <person name="Johnson A."/>
            <person name="Chen E."/>
            <person name="Marra M.A."/>
            <person name="Martienssen R."/>
            <person name="McCombie W.R."/>
        </authorList>
    </citation>
    <scope>NUCLEOTIDE SEQUENCE [LARGE SCALE GENOMIC DNA]</scope>
    <source>
        <strain>cv. Columbia</strain>
    </source>
</reference>
<reference key="2">
    <citation type="journal article" date="2017" name="Plant J.">
        <title>Araport11: a complete reannotation of the Arabidopsis thaliana reference genome.</title>
        <authorList>
            <person name="Cheng C.Y."/>
            <person name="Krishnakumar V."/>
            <person name="Chan A.P."/>
            <person name="Thibaud-Nissen F."/>
            <person name="Schobel S."/>
            <person name="Town C.D."/>
        </authorList>
    </citation>
    <scope>GENOME REANNOTATION</scope>
    <source>
        <strain>cv. Columbia</strain>
    </source>
</reference>
<reference key="3">
    <citation type="journal article" date="2003" name="Science">
        <title>Empirical analysis of transcriptional activity in the Arabidopsis genome.</title>
        <authorList>
            <person name="Yamada K."/>
            <person name="Lim J."/>
            <person name="Dale J.M."/>
            <person name="Chen H."/>
            <person name="Shinn P."/>
            <person name="Palm C.J."/>
            <person name="Southwick A.M."/>
            <person name="Wu H.C."/>
            <person name="Kim C.J."/>
            <person name="Nguyen M."/>
            <person name="Pham P.K."/>
            <person name="Cheuk R.F."/>
            <person name="Karlin-Newmann G."/>
            <person name="Liu S.X."/>
            <person name="Lam B."/>
            <person name="Sakano H."/>
            <person name="Wu T."/>
            <person name="Yu G."/>
            <person name="Miranda M."/>
            <person name="Quach H.L."/>
            <person name="Tripp M."/>
            <person name="Chang C.H."/>
            <person name="Lee J.M."/>
            <person name="Toriumi M.J."/>
            <person name="Chan M.M."/>
            <person name="Tang C.C."/>
            <person name="Onodera C.S."/>
            <person name="Deng J.M."/>
            <person name="Akiyama K."/>
            <person name="Ansari Y."/>
            <person name="Arakawa T."/>
            <person name="Banh J."/>
            <person name="Banno F."/>
            <person name="Bowser L."/>
            <person name="Brooks S.Y."/>
            <person name="Carninci P."/>
            <person name="Chao Q."/>
            <person name="Choy N."/>
            <person name="Enju A."/>
            <person name="Goldsmith A.D."/>
            <person name="Gurjal M."/>
            <person name="Hansen N.F."/>
            <person name="Hayashizaki Y."/>
            <person name="Johnson-Hopson C."/>
            <person name="Hsuan V.W."/>
            <person name="Iida K."/>
            <person name="Karnes M."/>
            <person name="Khan S."/>
            <person name="Koesema E."/>
            <person name="Ishida J."/>
            <person name="Jiang P.X."/>
            <person name="Jones T."/>
            <person name="Kawai J."/>
            <person name="Kamiya A."/>
            <person name="Meyers C."/>
            <person name="Nakajima M."/>
            <person name="Narusaka M."/>
            <person name="Seki M."/>
            <person name="Sakurai T."/>
            <person name="Satou M."/>
            <person name="Tamse R."/>
            <person name="Vaysberg M."/>
            <person name="Wallender E.K."/>
            <person name="Wong C."/>
            <person name="Yamamura Y."/>
            <person name="Yuan S."/>
            <person name="Shinozaki K."/>
            <person name="Davis R.W."/>
            <person name="Theologis A."/>
            <person name="Ecker J.R."/>
        </authorList>
    </citation>
    <scope>NUCLEOTIDE SEQUENCE [LARGE SCALE MRNA]</scope>
    <source>
        <strain>cv. Columbia</strain>
    </source>
</reference>
<reference key="4">
    <citation type="journal article" date="2015" name="J. Biol. Chem.">
        <title>Tuning of pectin methylesterification: Pectin methylesterase inhibitor 7 modulates the processive activity of co-expressed pectin methylesterase 3 in a ph-dependent manner.</title>
        <authorList>
            <person name="Senechal F."/>
            <person name="L'Enfant M."/>
            <person name="Domon J.-M."/>
            <person name="Rosiau E."/>
            <person name="Crepeau M.-J."/>
            <person name="Surcouf O."/>
            <person name="Esquivel-Rodriguez J."/>
            <person name="Marcelo P."/>
            <person name="Mareck A."/>
            <person name="Guerineau F."/>
            <person name="Kim H.-R."/>
            <person name="Mravec J."/>
            <person name="Bonnin E."/>
            <person name="Jamet E."/>
            <person name="Kihara D."/>
            <person name="Lerouge P."/>
            <person name="Ralet M.-C."/>
            <person name="Pelloux J."/>
            <person name="Rayon C."/>
        </authorList>
    </citation>
    <scope>FUNCTION</scope>
    <scope>TISSUE SPECIFICITY</scope>
    <scope>SUBCELLULAR LOCATION</scope>
    <scope>IDENTIFICATION BY MASS SPECTROMETRY</scope>
    <scope>INTERACTION WITH PME3</scope>
    <source>
        <strain>cv. Columbia</strain>
    </source>
</reference>
<reference key="5">
    <citation type="journal article" date="2017" name="J. Biol. Chem.">
        <title>Structural and dynamical characterization of the pH-dependence of the pectin methylesterase-pectin methylesterase inhibitor complex.</title>
        <authorList>
            <person name="Senechal F."/>
            <person name="Habrylo O."/>
            <person name="Hocq L."/>
            <person name="Domon J.M."/>
            <person name="Marcelo P."/>
            <person name="Lefebvre V."/>
            <person name="Pelloux J."/>
            <person name="Mercadante D."/>
        </authorList>
    </citation>
    <scope>FUNCTION</scope>
    <scope>MUTAGENESIS OF GLU-103 AND GLU-110</scope>
    <scope>INTERACTION WITH PME3</scope>
</reference>
<comment type="function">
    <text evidence="4 5">Pectin methylesterase (PME) inhibitor that can target PME3 in a pH-dependent manner, mainly in slightly acidic conditions (pH 6.0 and 5.0) but not at pH 7.0; this processus relies on changes in the protonation of amino acids involved in intermolecular and intramolecular interactions (PubMed:26183897, PubMed:29109147). Regulates homogalacturonan methylesterification during plant development (PubMed:26183897).</text>
</comment>
<comment type="subunit">
    <text evidence="4 5">Binds reversibly to PME3 to inhibit its activity; the stability of the PME3-PMEI7 complex and the inhibition of the pectin methylesterase (PME) activity is pH-dependent, based on protonation status of amino-acids at the complex interface.</text>
</comment>
<comment type="subcellular location">
    <subcellularLocation>
        <location evidence="2">Secreted</location>
        <location evidence="2">Extracellular space</location>
        <location evidence="2">Apoplast</location>
    </subcellularLocation>
    <subcellularLocation>
        <location evidence="4">Secreted</location>
        <location evidence="4">Cell wall</location>
    </subcellularLocation>
    <text evidence="4">Present in hypocotyl cell walls.</text>
</comment>
<comment type="tissue specificity">
    <text evidence="4">Accumulates in etiolated hypocotyls (at protein level).</text>
</comment>
<comment type="similarity">
    <text evidence="7">Belongs to the PMEI family.</text>
</comment>
<keyword id="KW-0052">Apoplast</keyword>
<keyword id="KW-0134">Cell wall</keyword>
<keyword id="KW-1015">Disulfide bond</keyword>
<keyword id="KW-1185">Reference proteome</keyword>
<keyword id="KW-0964">Secreted</keyword>
<keyword id="KW-0732">Signal</keyword>